<feature type="chain" id="PRO_0000456088" description="Toxin Tppa1">
    <location>
        <begin position="1"/>
        <end position="64"/>
    </location>
</feature>
<feature type="domain" description="LCN-type CS-alpha/beta" evidence="2">
    <location>
        <begin position="1"/>
        <end position="63"/>
    </location>
</feature>
<feature type="disulfide bond" evidence="2">
    <location>
        <begin position="11"/>
        <end position="62"/>
    </location>
</feature>
<feature type="disulfide bond" evidence="2">
    <location>
        <begin position="15"/>
        <end position="37"/>
    </location>
</feature>
<feature type="disulfide bond" evidence="2">
    <location>
        <begin position="23"/>
        <end position="43"/>
    </location>
</feature>
<feature type="disulfide bond" evidence="2">
    <location>
        <begin position="27"/>
        <end position="45"/>
    </location>
</feature>
<reference evidence="5" key="1">
    <citation type="journal article" date="2022" name="Toxicon X">
        <title>Heterologous expression of four recombinant toxins from Panamanian scorpions of the genus Tityus and Centruroides for production of antivenom.</title>
        <authorList>
            <person name="Salazar M.H."/>
            <person name="Clement H."/>
            <person name="Corrales-Garcia L.L."/>
            <person name="Sanchez J."/>
            <person name="Cleghorn J."/>
            <person name="Zamudio F."/>
            <person name="Possani L.D."/>
            <person name="Acosta H."/>
            <person name="Corzo G."/>
        </authorList>
    </citation>
    <scope>NUCLEOTIDE SEQUENCE [MRNA]</scope>
    <scope>PROTEIN SEQUENCE OF 1-20</scope>
    <scope>SUBCELLULAR LOCATION</scope>
    <scope>TISSUE SPECIFICITY</scope>
    <scope>MASS SPECTROMETRY</scope>
    <source>
        <tissue>Venom</tissue>
        <tissue evidence="4">Venom gland</tissue>
    </source>
</reference>
<protein>
    <recommendedName>
        <fullName evidence="4">Toxin Tppa1</fullName>
    </recommendedName>
</protein>
<sequence length="66" mass="7525">KDGYLVGNDGCKYSCLTRPGHYCASECSRVKGKDGYCYAWMACYCYSMPDWVKTWSRSTNRCGRGK</sequence>
<keyword id="KW-0027">Amidation</keyword>
<keyword id="KW-0903">Direct protein sequencing</keyword>
<keyword id="KW-1015">Disulfide bond</keyword>
<keyword id="KW-0872">Ion channel impairing toxin</keyword>
<keyword id="KW-0528">Neurotoxin</keyword>
<keyword id="KW-0964">Secreted</keyword>
<keyword id="KW-0800">Toxin</keyword>
<keyword id="KW-0738">Voltage-gated sodium channel impairing toxin</keyword>
<proteinExistence type="evidence at protein level"/>
<organism evidence="4">
    <name type="scientific">Tityus pachyurus</name>
    <name type="common">Colombian scorpion</name>
    <dbReference type="NCBI Taxonomy" id="288781"/>
    <lineage>
        <taxon>Eukaryota</taxon>
        <taxon>Metazoa</taxon>
        <taxon>Ecdysozoa</taxon>
        <taxon>Arthropoda</taxon>
        <taxon>Chelicerata</taxon>
        <taxon>Arachnida</taxon>
        <taxon>Scorpiones</taxon>
        <taxon>Buthida</taxon>
        <taxon>Buthoidea</taxon>
        <taxon>Buthidae</taxon>
        <taxon>Tityus</taxon>
    </lineage>
</organism>
<accession>C0HLZ0</accession>
<dbReference type="SMR" id="C0HLZ0"/>
<dbReference type="GO" id="GO:0005576">
    <property type="term" value="C:extracellular region"/>
    <property type="evidence" value="ECO:0000314"/>
    <property type="project" value="UniProtKB"/>
</dbReference>
<dbReference type="GO" id="GO:0019871">
    <property type="term" value="F:sodium channel inhibitor activity"/>
    <property type="evidence" value="ECO:0007669"/>
    <property type="project" value="InterPro"/>
</dbReference>
<dbReference type="GO" id="GO:0090729">
    <property type="term" value="F:toxin activity"/>
    <property type="evidence" value="ECO:0007669"/>
    <property type="project" value="UniProtKB-KW"/>
</dbReference>
<dbReference type="GO" id="GO:0006952">
    <property type="term" value="P:defense response"/>
    <property type="evidence" value="ECO:0007669"/>
    <property type="project" value="InterPro"/>
</dbReference>
<dbReference type="CDD" id="cd23106">
    <property type="entry name" value="neurotoxins_LC_scorpion"/>
    <property type="match status" value="1"/>
</dbReference>
<dbReference type="FunFam" id="3.30.30.10:FF:000002">
    <property type="entry name" value="Alpha-like toxin BmK-M1"/>
    <property type="match status" value="1"/>
</dbReference>
<dbReference type="Gene3D" id="3.30.30.10">
    <property type="entry name" value="Knottin, scorpion toxin-like"/>
    <property type="match status" value="1"/>
</dbReference>
<dbReference type="InterPro" id="IPR044062">
    <property type="entry name" value="LCN-type_CS_alpha_beta_dom"/>
</dbReference>
<dbReference type="InterPro" id="IPR003614">
    <property type="entry name" value="Scorpion_toxin-like"/>
</dbReference>
<dbReference type="InterPro" id="IPR036574">
    <property type="entry name" value="Scorpion_toxin-like_sf"/>
</dbReference>
<dbReference type="InterPro" id="IPR018218">
    <property type="entry name" value="Scorpion_toxinL"/>
</dbReference>
<dbReference type="InterPro" id="IPR002061">
    <property type="entry name" value="Scorpion_toxinL/defensin"/>
</dbReference>
<dbReference type="Pfam" id="PF00537">
    <property type="entry name" value="Toxin_3"/>
    <property type="match status" value="1"/>
</dbReference>
<dbReference type="PRINTS" id="PR00285">
    <property type="entry name" value="SCORPNTOXIN"/>
</dbReference>
<dbReference type="SMART" id="SM00505">
    <property type="entry name" value="Knot1"/>
    <property type="match status" value="1"/>
</dbReference>
<dbReference type="SUPFAM" id="SSF57095">
    <property type="entry name" value="Scorpion toxin-like"/>
    <property type="match status" value="1"/>
</dbReference>
<dbReference type="PROSITE" id="PS51863">
    <property type="entry name" value="LCN_CSAB"/>
    <property type="match status" value="1"/>
</dbReference>
<evidence type="ECO:0000250" key="1">
    <source>
        <dbReference type="UniProtKB" id="Q2NME3"/>
    </source>
</evidence>
<evidence type="ECO:0000255" key="2">
    <source>
        <dbReference type="PROSITE-ProRule" id="PRU01210"/>
    </source>
</evidence>
<evidence type="ECO:0000269" key="3">
    <source>
    </source>
</evidence>
<evidence type="ECO:0000303" key="4">
    <source>
    </source>
</evidence>
<evidence type="ECO:0000305" key="5"/>
<comment type="function">
    <text evidence="1">Beta toxins bind voltage-independently at site-4 of sodium channels (Nav) and shift the voltage of activation toward more negative potentials thereby affecting sodium channel activation and promoting spontaneous and repetitive firing.</text>
</comment>
<comment type="subcellular location">
    <subcellularLocation>
        <location evidence="3">Secreted</location>
    </subcellularLocation>
</comment>
<comment type="tissue specificity">
    <text evidence="3">Expressed by the venom gland.</text>
</comment>
<comment type="domain">
    <text evidence="5">Has the structural arrangement of an alpha-helix connected to antiparallel beta-sheets by disulfide bonds (CS-alpha/beta).</text>
</comment>
<comment type="mass spectrometry" mass="7331.3" method="Electrospray" evidence="3">
    <text>Average mass.</text>
</comment>
<comment type="similarity">
    <text evidence="5">Belongs to the long (4 C-C) scorpion toxin superfamily. Sodium channel inhibitor family. Beta subfamily.</text>
</comment>
<name>SCX9_TITPA</name>